<accession>P22520</accession>
<geneLocation type="plasmid">
    <name>IncFI ColV3-K30</name>
</geneLocation>
<sequence length="698" mass="78246">MTNRNFRQIINLLDLRWQRRVPVIHQTETAECGLACLAMICGHFGKNIDLIYLRRKFNLSARGATLAGINGIAEQLGMATRALSLELDELRVLKTPCILHWDFSHFVVLVSVKRNRYVLHDPARGIRYISREEMSRYFTGVALEVWPGSEFQSETLQTRISLRSLINSIYGIKRTLAKIFCLSVVIEAINLLMPVGTQLVMDHAIPAGDRGLLTLISAALMFFILLKAATSTLRAWSSLVMSTLINVQWQSGLFDHLLRLPLAFFERRKLGDIQSRFDSLDTLRATFTTSVIGFIMDSIMVVGVCVMMLLYGGYLTWIVLCFTTIYIFIRLVTYGNYRQISEECLVREARAASYFMETLYGIATVKIQGMVGIRGAHWLNMKIDAINSGIKLTRMDLLFGGINTFVTACDQIVILWLGAGLVIDNQMTIGMFVAFSSFRGQFSERVASLTSFLLQLRIMSLHNERIADIALHEKEEKKPEIEIVADMGPISLETNGLSYRYDSQSAPIFSALSLSVAPGESVAITGASGAGKTTLMKVLCGLFEPDSGRVLINGIDIRQIGINNYHRMIACVMQDDRLFSGSIRENICGFAEEMDEEWMVECARASHIHDVIMNMPMGYETLIGELGEGLSGGQKQRIFIARALYRKPGILFMDEATSALDSESEHFVNVAIKNMNITRVIIAHRETTLRTVDRVISI</sequence>
<keyword id="KW-0067">ATP-binding</keyword>
<keyword id="KW-0080">Bacteriocin transport</keyword>
<keyword id="KW-1003">Cell membrane</keyword>
<keyword id="KW-0378">Hydrolase</keyword>
<keyword id="KW-0472">Membrane</keyword>
<keyword id="KW-0547">Nucleotide-binding</keyword>
<keyword id="KW-0614">Plasmid</keyword>
<keyword id="KW-0645">Protease</keyword>
<keyword id="KW-0653">Protein transport</keyword>
<keyword id="KW-0788">Thiol protease</keyword>
<keyword id="KW-1278">Translocase</keyword>
<keyword id="KW-0812">Transmembrane</keyword>
<keyword id="KW-1133">Transmembrane helix</keyword>
<keyword id="KW-0813">Transport</keyword>
<comment type="function">
    <text>Involved, in conjunction with CvaA, in the secretion of colicin V.</text>
</comment>
<comment type="subcellular location">
    <subcellularLocation>
        <location>Cell membrane</location>
        <topology>Multi-pass membrane protein</topology>
    </subcellularLocation>
</comment>
<comment type="similarity">
    <text evidence="4">Belongs to the ABC transporter superfamily. Colicin V exporter (TC 3.A.1.110.2) family.</text>
</comment>
<evidence type="ECO:0000255" key="1">
    <source>
        <dbReference type="PROSITE-ProRule" id="PRU00362"/>
    </source>
</evidence>
<evidence type="ECO:0000255" key="2">
    <source>
        <dbReference type="PROSITE-ProRule" id="PRU00434"/>
    </source>
</evidence>
<evidence type="ECO:0000255" key="3">
    <source>
        <dbReference type="PROSITE-ProRule" id="PRU00441"/>
    </source>
</evidence>
<evidence type="ECO:0000305" key="4"/>
<reference key="1">
    <citation type="journal article" date="1990" name="EMBO J.">
        <title>Genetic analysis of an MDR-like export system: the secretion of colicin V.</title>
        <authorList>
            <person name="Gilson L."/>
            <person name="Mahanty H.K."/>
            <person name="Kolter R."/>
        </authorList>
    </citation>
    <scope>NUCLEOTIDE SEQUENCE [GENOMIC DNA]</scope>
</reference>
<reference key="2">
    <citation type="journal article" date="1998" name="J. Exp. Med.">
        <title>Characterization of a hemoglobin protease secreted by the pathogenic Escherichia coli strain EB1.</title>
        <authorList>
            <person name="Otto B.R."/>
            <person name="van Dooren S.J.M."/>
            <person name="Nuijens J.H."/>
            <person name="Luirink J."/>
            <person name="Oudega B."/>
        </authorList>
    </citation>
    <scope>NUCLEOTIDE SEQUENCE [GENOMIC DNA] OF 373-698</scope>
</reference>
<name>CVAB_ECOLX</name>
<organism>
    <name type="scientific">Escherichia coli</name>
    <dbReference type="NCBI Taxonomy" id="562"/>
    <lineage>
        <taxon>Bacteria</taxon>
        <taxon>Pseudomonadati</taxon>
        <taxon>Pseudomonadota</taxon>
        <taxon>Gammaproteobacteria</taxon>
        <taxon>Enterobacterales</taxon>
        <taxon>Enterobacteriaceae</taxon>
        <taxon>Escherichia</taxon>
    </lineage>
</organism>
<gene>
    <name type="primary">cvaB</name>
</gene>
<protein>
    <recommendedName>
        <fullName>Colicin V secretion/processing ATP-binding protein CvaB</fullName>
        <ecNumber>3.4.22.-</ecNumber>
        <ecNumber>7.6.2.-</ecNumber>
    </recommendedName>
</protein>
<feature type="chain" id="PRO_0000092238" description="Colicin V secretion/processing ATP-binding protein CvaB">
    <location>
        <begin position="1"/>
        <end position="698"/>
    </location>
</feature>
<feature type="transmembrane region" description="Helical" evidence="3">
    <location>
        <begin position="33"/>
        <end position="53"/>
    </location>
</feature>
<feature type="transmembrane region" description="Helical" evidence="3">
    <location>
        <begin position="92"/>
        <end position="112"/>
    </location>
</feature>
<feature type="transmembrane region" description="Helical" evidence="3">
    <location>
        <begin position="176"/>
        <end position="196"/>
    </location>
</feature>
<feature type="transmembrane region" description="Helical" evidence="3">
    <location>
        <begin position="211"/>
        <end position="231"/>
    </location>
</feature>
<feature type="transmembrane region" description="Helical" evidence="3">
    <location>
        <begin position="289"/>
        <end position="311"/>
    </location>
</feature>
<feature type="transmembrane region" description="Helical" evidence="3">
    <location>
        <begin position="315"/>
        <end position="334"/>
    </location>
</feature>
<feature type="transmembrane region" description="Helical" evidence="3">
    <location>
        <begin position="412"/>
        <end position="432"/>
    </location>
</feature>
<feature type="domain" description="Peptidase C39" evidence="1">
    <location>
        <begin position="26"/>
        <end position="145"/>
    </location>
</feature>
<feature type="domain" description="ABC transmembrane type-1" evidence="3">
    <location>
        <begin position="176"/>
        <end position="458"/>
    </location>
</feature>
<feature type="domain" description="ABC transporter" evidence="1 2">
    <location>
        <begin position="492"/>
        <end position="698"/>
    </location>
</feature>
<feature type="active site" evidence="1">
    <location>
        <position position="32"/>
    </location>
</feature>
<feature type="binding site" evidence="1 2">
    <location>
        <begin position="526"/>
        <end position="533"/>
    </location>
    <ligand>
        <name>ATP</name>
        <dbReference type="ChEBI" id="CHEBI:30616"/>
    </ligand>
</feature>
<proteinExistence type="inferred from homology"/>
<dbReference type="EC" id="3.4.22.-"/>
<dbReference type="EC" id="7.6.2.-"/>
<dbReference type="EMBL" id="X57524">
    <property type="protein sequence ID" value="CAA40744.1"/>
    <property type="molecule type" value="Genomic_DNA"/>
</dbReference>
<dbReference type="EMBL" id="AJ223631">
    <property type="protein sequence ID" value="CAA11515.1"/>
    <property type="molecule type" value="Genomic_DNA"/>
</dbReference>
<dbReference type="PIR" id="S12272">
    <property type="entry name" value="IKEC5B"/>
</dbReference>
<dbReference type="RefSeq" id="WP_000184924.1">
    <property type="nucleotide sequence ID" value="NZ_WVVI01000036.1"/>
</dbReference>
<dbReference type="SMR" id="P22520"/>
<dbReference type="MEROPS" id="C39.005"/>
<dbReference type="TCDB" id="3.A.1.112.12">
    <property type="family name" value="the atp-binding cassette (abc) superfamily"/>
</dbReference>
<dbReference type="GO" id="GO:0005886">
    <property type="term" value="C:plasma membrane"/>
    <property type="evidence" value="ECO:0007669"/>
    <property type="project" value="UniProtKB-SubCell"/>
</dbReference>
<dbReference type="GO" id="GO:0140359">
    <property type="term" value="F:ABC-type transporter activity"/>
    <property type="evidence" value="ECO:0007669"/>
    <property type="project" value="InterPro"/>
</dbReference>
<dbReference type="GO" id="GO:0005524">
    <property type="term" value="F:ATP binding"/>
    <property type="evidence" value="ECO:0007669"/>
    <property type="project" value="UniProtKB-KW"/>
</dbReference>
<dbReference type="GO" id="GO:0016887">
    <property type="term" value="F:ATP hydrolysis activity"/>
    <property type="evidence" value="ECO:0007669"/>
    <property type="project" value="InterPro"/>
</dbReference>
<dbReference type="GO" id="GO:0034040">
    <property type="term" value="F:ATPase-coupled lipid transmembrane transporter activity"/>
    <property type="evidence" value="ECO:0007669"/>
    <property type="project" value="TreeGrafter"/>
</dbReference>
<dbReference type="GO" id="GO:0008234">
    <property type="term" value="F:cysteine-type peptidase activity"/>
    <property type="evidence" value="ECO:0007669"/>
    <property type="project" value="UniProtKB-KW"/>
</dbReference>
<dbReference type="GO" id="GO:0043213">
    <property type="term" value="P:bacteriocin transport"/>
    <property type="evidence" value="ECO:0007669"/>
    <property type="project" value="UniProtKB-KW"/>
</dbReference>
<dbReference type="GO" id="GO:0015031">
    <property type="term" value="P:protein transport"/>
    <property type="evidence" value="ECO:0007669"/>
    <property type="project" value="UniProtKB-KW"/>
</dbReference>
<dbReference type="GO" id="GO:0006508">
    <property type="term" value="P:proteolysis"/>
    <property type="evidence" value="ECO:0007669"/>
    <property type="project" value="UniProtKB-KW"/>
</dbReference>
<dbReference type="CDD" id="cd18567">
    <property type="entry name" value="ABC_6TM_CvaB_RaxB_like"/>
    <property type="match status" value="1"/>
</dbReference>
<dbReference type="CDD" id="cd02419">
    <property type="entry name" value="Peptidase_C39C"/>
    <property type="match status" value="1"/>
</dbReference>
<dbReference type="Gene3D" id="1.20.1560.10">
    <property type="entry name" value="ABC transporter type 1, transmembrane domain"/>
    <property type="match status" value="1"/>
</dbReference>
<dbReference type="Gene3D" id="3.90.70.10">
    <property type="entry name" value="Cysteine proteinases"/>
    <property type="match status" value="1"/>
</dbReference>
<dbReference type="Gene3D" id="3.40.50.300">
    <property type="entry name" value="P-loop containing nucleotide triphosphate hydrolases"/>
    <property type="match status" value="1"/>
</dbReference>
<dbReference type="InterPro" id="IPR003593">
    <property type="entry name" value="AAA+_ATPase"/>
</dbReference>
<dbReference type="InterPro" id="IPR011527">
    <property type="entry name" value="ABC1_TM_dom"/>
</dbReference>
<dbReference type="InterPro" id="IPR036640">
    <property type="entry name" value="ABC1_TM_sf"/>
</dbReference>
<dbReference type="InterPro" id="IPR003439">
    <property type="entry name" value="ABC_transporter-like_ATP-bd"/>
</dbReference>
<dbReference type="InterPro" id="IPR017871">
    <property type="entry name" value="ABC_transporter-like_CS"/>
</dbReference>
<dbReference type="InterPro" id="IPR033838">
    <property type="entry name" value="CvaB_peptidase"/>
</dbReference>
<dbReference type="InterPro" id="IPR027417">
    <property type="entry name" value="P-loop_NTPase"/>
</dbReference>
<dbReference type="InterPro" id="IPR005074">
    <property type="entry name" value="Peptidase_C39"/>
</dbReference>
<dbReference type="InterPro" id="IPR039421">
    <property type="entry name" value="Type_1_exporter"/>
</dbReference>
<dbReference type="PANTHER" id="PTHR24221">
    <property type="entry name" value="ATP-BINDING CASSETTE SUB-FAMILY B"/>
    <property type="match status" value="1"/>
</dbReference>
<dbReference type="PANTHER" id="PTHR24221:SF606">
    <property type="entry name" value="COLICIN V SECRETION-PROCESSING ATP-BINDING PROTEIN"/>
    <property type="match status" value="1"/>
</dbReference>
<dbReference type="Pfam" id="PF00664">
    <property type="entry name" value="ABC_membrane"/>
    <property type="match status" value="1"/>
</dbReference>
<dbReference type="Pfam" id="PF00005">
    <property type="entry name" value="ABC_tran"/>
    <property type="match status" value="1"/>
</dbReference>
<dbReference type="Pfam" id="PF03412">
    <property type="entry name" value="Peptidase_C39"/>
    <property type="match status" value="1"/>
</dbReference>
<dbReference type="SMART" id="SM00382">
    <property type="entry name" value="AAA"/>
    <property type="match status" value="1"/>
</dbReference>
<dbReference type="SUPFAM" id="SSF90123">
    <property type="entry name" value="ABC transporter transmembrane region"/>
    <property type="match status" value="1"/>
</dbReference>
<dbReference type="SUPFAM" id="SSF52540">
    <property type="entry name" value="P-loop containing nucleoside triphosphate hydrolases"/>
    <property type="match status" value="1"/>
</dbReference>
<dbReference type="PROSITE" id="PS50929">
    <property type="entry name" value="ABC_TM1F"/>
    <property type="match status" value="1"/>
</dbReference>
<dbReference type="PROSITE" id="PS00211">
    <property type="entry name" value="ABC_TRANSPORTER_1"/>
    <property type="match status" value="1"/>
</dbReference>
<dbReference type="PROSITE" id="PS50893">
    <property type="entry name" value="ABC_TRANSPORTER_2"/>
    <property type="match status" value="1"/>
</dbReference>
<dbReference type="PROSITE" id="PS50990">
    <property type="entry name" value="PEPTIDASE_C39"/>
    <property type="match status" value="1"/>
</dbReference>